<proteinExistence type="predicted"/>
<accession>P33694</accession>
<sequence>MLQILYLAQDLADPAVRRRTLTLVAGGARVTLAGFRRGDNPLAAIDGVEPIELGTTADGRFAQRIGAVARACLSLQRQLGHVRKPDVIIARNLEMLAVARRAVAFFGGTVPIVYECLDIHRLMLRKDIVGRMLRAAESQLGKDARLLITSSPAFIEHYFRPLSGIGAPPMLLENKVLEIDGTVERRTASPAKSPPPGAPWKIGWFGALRCRRSLALLAEFSRKMEGRFEIVLRGRPAYSEFDDFDGFVRNEPFMRFEGAYRNPEDLAEIYGEVHFTWAIDFFEEGQNSAWLLPNRLYEGCRHGRIPIAMKGTETARFLSVRSIGLVLEGADVESLATVLGPLTPNCYADAAERISRCNPGSWVFDRTDCEALVRQLATLTLQAPQTVPVVAMAGSSHKEGGFL</sequence>
<organism>
    <name type="scientific">Rhizobium meliloti (strain 1021)</name>
    <name type="common">Ensifer meliloti</name>
    <name type="synonym">Sinorhizobium meliloti</name>
    <dbReference type="NCBI Taxonomy" id="266834"/>
    <lineage>
        <taxon>Bacteria</taxon>
        <taxon>Pseudomonadati</taxon>
        <taxon>Pseudomonadota</taxon>
        <taxon>Alphaproteobacteria</taxon>
        <taxon>Hyphomicrobiales</taxon>
        <taxon>Rhizobiaceae</taxon>
        <taxon>Sinorhizobium/Ensifer group</taxon>
        <taxon>Sinorhizobium</taxon>
    </lineage>
</organism>
<comment type="function">
    <text>Essential for succinoglycan (EPS I) synthesis and nodule infection. Glycosyltransferase needed for the addition of the third sugar (glucose), catalyzes the formation of a beta-1,4 linkage between the second and third sugars.</text>
</comment>
<comment type="pathway">
    <text>Glycan metabolism; exopolysaccharide biosynthesis.</text>
</comment>
<comment type="subcellular location">
    <subcellularLocation>
        <location>Cytoplasm</location>
    </subcellularLocation>
</comment>
<evidence type="ECO:0000305" key="1"/>
<name>EXOL_RHIME</name>
<protein>
    <recommendedName>
        <fullName>Succinoglycan biosynthesis protein ExoL</fullName>
        <ecNumber>2.-.-.-</ecNumber>
    </recommendedName>
</protein>
<feature type="chain" id="PRO_0000087124" description="Succinoglycan biosynthesis protein ExoL">
    <location>
        <begin position="1"/>
        <end position="403"/>
    </location>
</feature>
<feature type="sequence conflict" description="In Ref. 1; AAA16047." evidence="1" ref="1">
    <original>ML</original>
    <variation>IV</variation>
    <location>
        <begin position="123"/>
        <end position="124"/>
    </location>
</feature>
<feature type="sequence conflict" description="In Ref. 1; AAA16047." evidence="1" ref="1">
    <original>L</original>
    <variation>V</variation>
    <location>
        <position position="379"/>
    </location>
</feature>
<gene>
    <name type="primary">exoL</name>
    <name type="ordered locus">RB1081</name>
    <name type="ORF">SMb20956</name>
</gene>
<reference key="1">
    <citation type="journal article" date="1993" name="J. Bacteriol.">
        <title>Family of glycosyl transferases needed for the synthesis of succinoglycan by Rhizobium meliloti.</title>
        <authorList>
            <person name="Glucksmann M.A."/>
            <person name="Reuber T.L."/>
            <person name="Walker G.C."/>
        </authorList>
    </citation>
    <scope>NUCLEOTIDE SEQUENCE [GENOMIC DNA]</scope>
    <source>
        <strain>1021</strain>
    </source>
</reference>
<reference key="2">
    <citation type="journal article" date="1993" name="Mol. Gen. Genet.">
        <title>Analysis of the Rhizobium meliloti exoH/exoK/exoL fragment: ExoK shows homology to excreted endo-beta-1,3-1,4-glucanases and ExoH resembles membrane proteins.</title>
        <authorList>
            <person name="Becker A."/>
            <person name="Kleickmann A."/>
            <person name="Arnold W."/>
            <person name="Puehler A."/>
        </authorList>
    </citation>
    <scope>NUCLEOTIDE SEQUENCE [GENOMIC DNA]</scope>
    <source>
        <strain>RCR2011 / SU47</strain>
    </source>
</reference>
<reference key="3">
    <citation type="journal article" date="2001" name="Proc. Natl. Acad. Sci. U.S.A.">
        <title>The complete sequence of the 1,683-kb pSymB megaplasmid from the N2-fixing endosymbiont Sinorhizobium meliloti.</title>
        <authorList>
            <person name="Finan T.M."/>
            <person name="Weidner S."/>
            <person name="Wong K."/>
            <person name="Buhrmester J."/>
            <person name="Chain P."/>
            <person name="Vorhoelter F.J."/>
            <person name="Hernandez-Lucas I."/>
            <person name="Becker A."/>
            <person name="Cowie A."/>
            <person name="Gouzy J."/>
            <person name="Golding B."/>
            <person name="Puehler A."/>
        </authorList>
    </citation>
    <scope>NUCLEOTIDE SEQUENCE [LARGE SCALE GENOMIC DNA]</scope>
    <source>
        <strain>1021</strain>
    </source>
</reference>
<reference key="4">
    <citation type="journal article" date="2001" name="Science">
        <title>The composite genome of the legume symbiont Sinorhizobium meliloti.</title>
        <authorList>
            <person name="Galibert F."/>
            <person name="Finan T.M."/>
            <person name="Long S.R."/>
            <person name="Puehler A."/>
            <person name="Abola P."/>
            <person name="Ampe F."/>
            <person name="Barloy-Hubler F."/>
            <person name="Barnett M.J."/>
            <person name="Becker A."/>
            <person name="Boistard P."/>
            <person name="Bothe G."/>
            <person name="Boutry M."/>
            <person name="Bowser L."/>
            <person name="Buhrmester J."/>
            <person name="Cadieu E."/>
            <person name="Capela D."/>
            <person name="Chain P."/>
            <person name="Cowie A."/>
            <person name="Davis R.W."/>
            <person name="Dreano S."/>
            <person name="Federspiel N.A."/>
            <person name="Fisher R.F."/>
            <person name="Gloux S."/>
            <person name="Godrie T."/>
            <person name="Goffeau A."/>
            <person name="Golding B."/>
            <person name="Gouzy J."/>
            <person name="Gurjal M."/>
            <person name="Hernandez-Lucas I."/>
            <person name="Hong A."/>
            <person name="Huizar L."/>
            <person name="Hyman R.W."/>
            <person name="Jones T."/>
            <person name="Kahn D."/>
            <person name="Kahn M.L."/>
            <person name="Kalman S."/>
            <person name="Keating D.H."/>
            <person name="Kiss E."/>
            <person name="Komp C."/>
            <person name="Lelaure V."/>
            <person name="Masuy D."/>
            <person name="Palm C."/>
            <person name="Peck M.C."/>
            <person name="Pohl T.M."/>
            <person name="Portetelle D."/>
            <person name="Purnelle B."/>
            <person name="Ramsperger U."/>
            <person name="Surzycki R."/>
            <person name="Thebault P."/>
            <person name="Vandenbol M."/>
            <person name="Vorhoelter F.J."/>
            <person name="Weidner S."/>
            <person name="Wells D.H."/>
            <person name="Wong K."/>
            <person name="Yeh K.-C."/>
            <person name="Batut J."/>
        </authorList>
    </citation>
    <scope>NUCLEOTIDE SEQUENCE [LARGE SCALE GENOMIC DNA]</scope>
    <source>
        <strain>1021</strain>
    </source>
</reference>
<reference key="5">
    <citation type="journal article" date="1993" name="Mol. Gen. Genet.">
        <title>Identification and analysis of the Rhizobium meliloti exoAMONP genes involved in exopolysaccharide biosynthesis and mapping of promoters located on the exoHKLAMONP fragment.</title>
        <authorList>
            <person name="Becker A."/>
            <person name="Kleickmann A."/>
            <person name="Keller M."/>
            <person name="Arnold W."/>
            <person name="Puehler A."/>
        </authorList>
    </citation>
    <scope>NUCLEOTIDE SEQUENCE [GENOMIC DNA] OF 287-403</scope>
    <source>
        <strain>RCR2011 / SU47</strain>
    </source>
</reference>
<geneLocation type="plasmid">
    <name>pSymB</name>
    <name>megaplasmid 2</name>
</geneLocation>
<keyword id="KW-0963">Cytoplasm</keyword>
<keyword id="KW-0270">Exopolysaccharide synthesis</keyword>
<keyword id="KW-0328">Glycosyltransferase</keyword>
<keyword id="KW-0614">Plasmid</keyword>
<keyword id="KW-1185">Reference proteome</keyword>
<keyword id="KW-0808">Transferase</keyword>
<dbReference type="EC" id="2.-.-.-"/>
<dbReference type="EMBL" id="L20758">
    <property type="protein sequence ID" value="AAA16047.1"/>
    <property type="molecule type" value="Unassigned_DNA"/>
</dbReference>
<dbReference type="EMBL" id="Z17219">
    <property type="protein sequence ID" value="CAA78928.1"/>
    <property type="molecule type" value="Genomic_DNA"/>
</dbReference>
<dbReference type="EMBL" id="AL591985">
    <property type="protein sequence ID" value="CAC49481.1"/>
    <property type="molecule type" value="Genomic_DNA"/>
</dbReference>
<dbReference type="EMBL" id="Z22636">
    <property type="status" value="NOT_ANNOTATED_CDS"/>
    <property type="molecule type" value="Genomic_DNA"/>
</dbReference>
<dbReference type="PIR" id="A95977">
    <property type="entry name" value="A95977"/>
</dbReference>
<dbReference type="PIR" id="S34805">
    <property type="entry name" value="S34805"/>
</dbReference>
<dbReference type="RefSeq" id="NP_437621.1">
    <property type="nucleotide sequence ID" value="NC_003078.1"/>
</dbReference>
<dbReference type="RefSeq" id="WP_010975918.1">
    <property type="nucleotide sequence ID" value="NC_003078.1"/>
</dbReference>
<dbReference type="SMR" id="P33694"/>
<dbReference type="EnsemblBacteria" id="CAC49481">
    <property type="protein sequence ID" value="CAC49481"/>
    <property type="gene ID" value="SM_b20956"/>
</dbReference>
<dbReference type="GeneID" id="89577820"/>
<dbReference type="KEGG" id="sme:SM_b20956"/>
<dbReference type="PATRIC" id="fig|266834.11.peg.6009"/>
<dbReference type="eggNOG" id="COG0438">
    <property type="taxonomic scope" value="Bacteria"/>
</dbReference>
<dbReference type="HOGENOM" id="CLU_061763_0_0_5"/>
<dbReference type="OrthoDB" id="7973140at2"/>
<dbReference type="BioCyc" id="MetaCyc:SM_B20956-MONOMER"/>
<dbReference type="UniPathway" id="UPA00631"/>
<dbReference type="Proteomes" id="UP000001976">
    <property type="component" value="Plasmid pSymB"/>
</dbReference>
<dbReference type="GO" id="GO:0005737">
    <property type="term" value="C:cytoplasm"/>
    <property type="evidence" value="ECO:0007669"/>
    <property type="project" value="UniProtKB-SubCell"/>
</dbReference>
<dbReference type="GO" id="GO:0016757">
    <property type="term" value="F:glycosyltransferase activity"/>
    <property type="evidence" value="ECO:0007669"/>
    <property type="project" value="UniProtKB-KW"/>
</dbReference>
<dbReference type="GO" id="GO:0000271">
    <property type="term" value="P:polysaccharide biosynthetic process"/>
    <property type="evidence" value="ECO:0007669"/>
    <property type="project" value="UniProtKB-KW"/>
</dbReference>
<dbReference type="SUPFAM" id="SSF53756">
    <property type="entry name" value="UDP-Glycosyltransferase/glycogen phosphorylase"/>
    <property type="match status" value="1"/>
</dbReference>